<accession>P0CM29</accession>
<accession>Q55S70</accession>
<protein>
    <recommendedName>
        <fullName>Ubiquitin-like protein ATG12</fullName>
    </recommendedName>
    <alternativeName>
        <fullName>Autophagy-related protein 12</fullName>
    </alternativeName>
</protein>
<proteinExistence type="inferred from homology"/>
<gene>
    <name type="primary">ATG12</name>
    <name type="ordered locus">CNBE3120</name>
</gene>
<sequence length="105" mass="11420">MATTTPPLDRLSPAQAQPAVVVRFKSIGSAPIMKNNVFKATAGHKFQAVIMFLRQQLGMKKEDSLFTYINAAFAPAPDDTVGSLYKSFGTEGHLIVNYSNTQAWG</sequence>
<reference key="1">
    <citation type="journal article" date="2005" name="Science">
        <title>The genome of the basidiomycetous yeast and human pathogen Cryptococcus neoformans.</title>
        <authorList>
            <person name="Loftus B.J."/>
            <person name="Fung E."/>
            <person name="Roncaglia P."/>
            <person name="Rowley D."/>
            <person name="Amedeo P."/>
            <person name="Bruno D."/>
            <person name="Vamathevan J."/>
            <person name="Miranda M."/>
            <person name="Anderson I.J."/>
            <person name="Fraser J.A."/>
            <person name="Allen J.E."/>
            <person name="Bosdet I.E."/>
            <person name="Brent M.R."/>
            <person name="Chiu R."/>
            <person name="Doering T.L."/>
            <person name="Donlin M.J."/>
            <person name="D'Souza C.A."/>
            <person name="Fox D.S."/>
            <person name="Grinberg V."/>
            <person name="Fu J."/>
            <person name="Fukushima M."/>
            <person name="Haas B.J."/>
            <person name="Huang J.C."/>
            <person name="Janbon G."/>
            <person name="Jones S.J.M."/>
            <person name="Koo H.L."/>
            <person name="Krzywinski M.I."/>
            <person name="Kwon-Chung K.J."/>
            <person name="Lengeler K.B."/>
            <person name="Maiti R."/>
            <person name="Marra M.A."/>
            <person name="Marra R.E."/>
            <person name="Mathewson C.A."/>
            <person name="Mitchell T.G."/>
            <person name="Pertea M."/>
            <person name="Riggs F.R."/>
            <person name="Salzberg S.L."/>
            <person name="Schein J.E."/>
            <person name="Shvartsbeyn A."/>
            <person name="Shin H."/>
            <person name="Shumway M."/>
            <person name="Specht C.A."/>
            <person name="Suh B.B."/>
            <person name="Tenney A."/>
            <person name="Utterback T.R."/>
            <person name="Wickes B.L."/>
            <person name="Wortman J.R."/>
            <person name="Wye N.H."/>
            <person name="Kronstad J.W."/>
            <person name="Lodge J.K."/>
            <person name="Heitman J."/>
            <person name="Davis R.W."/>
            <person name="Fraser C.M."/>
            <person name="Hyman R.W."/>
        </authorList>
    </citation>
    <scope>NUCLEOTIDE SEQUENCE [LARGE SCALE GENOMIC DNA]</scope>
    <source>
        <strain>B-3501A</strain>
    </source>
</reference>
<feature type="chain" id="PRO_0000410016" description="Ubiquitin-like protein ATG12">
    <location>
        <begin position="1"/>
        <end position="105"/>
    </location>
</feature>
<feature type="cross-link" description="Glycyl lysine isopeptide (Gly-Lys) (interchain with K-168 in ATG5)" evidence="1">
    <location>
        <position position="105"/>
    </location>
</feature>
<comment type="function">
    <text evidence="1">Ubiquitin-like protein involved in cytoplasm to vacuole transport (Cvt), autophagy vesicles formation, mitophagy, and nucleophagy. Conjugation with ATG5 through a ubiquitin-like conjugating system involving also ATG7 as an E1-like activating enzyme and ATG10 as an E2-like conjugating enzyme, is essential for its function. The ATG12-ATG5 conjugate functions as an E3-like enzyme which is required for lipidation of ATG8 and ATG8 association to the vesicle membranes (By similarity).</text>
</comment>
<comment type="subunit">
    <text evidence="1">Forms a conjugate with ATG5.</text>
</comment>
<comment type="subcellular location">
    <subcellularLocation>
        <location evidence="1">Preautophagosomal structure membrane</location>
        <topology evidence="1">Peripheral membrane protein</topology>
    </subcellularLocation>
</comment>
<comment type="similarity">
    <text evidence="2">Belongs to the ATG12 family.</text>
</comment>
<name>ATG12_CRYNB</name>
<dbReference type="EMBL" id="AAEY01000026">
    <property type="protein sequence ID" value="EAL20604.1"/>
    <property type="molecule type" value="Genomic_DNA"/>
</dbReference>
<dbReference type="RefSeq" id="XP_775251.1">
    <property type="nucleotide sequence ID" value="XM_770158.1"/>
</dbReference>
<dbReference type="SMR" id="P0CM29"/>
<dbReference type="GeneID" id="4936322"/>
<dbReference type="KEGG" id="cnb:CNBE3120"/>
<dbReference type="VEuPathDB" id="FungiDB:CNBE3120"/>
<dbReference type="HOGENOM" id="CLU_106795_3_1_1"/>
<dbReference type="OrthoDB" id="912at5206"/>
<dbReference type="GO" id="GO:0034274">
    <property type="term" value="C:Atg12-Atg5-Atg16 complex"/>
    <property type="evidence" value="ECO:0007669"/>
    <property type="project" value="TreeGrafter"/>
</dbReference>
<dbReference type="GO" id="GO:0000421">
    <property type="term" value="C:autophagosome membrane"/>
    <property type="evidence" value="ECO:0007669"/>
    <property type="project" value="TreeGrafter"/>
</dbReference>
<dbReference type="GO" id="GO:0034045">
    <property type="term" value="C:phagophore assembly site membrane"/>
    <property type="evidence" value="ECO:0007669"/>
    <property type="project" value="UniProtKB-SubCell"/>
</dbReference>
<dbReference type="GO" id="GO:0019776">
    <property type="term" value="F:Atg8-family ligase activity"/>
    <property type="evidence" value="ECO:0007669"/>
    <property type="project" value="TreeGrafter"/>
</dbReference>
<dbReference type="GO" id="GO:0000045">
    <property type="term" value="P:autophagosome assembly"/>
    <property type="evidence" value="ECO:0007669"/>
    <property type="project" value="InterPro"/>
</dbReference>
<dbReference type="GO" id="GO:0097352">
    <property type="term" value="P:autophagosome maturation"/>
    <property type="evidence" value="ECO:0007669"/>
    <property type="project" value="TreeGrafter"/>
</dbReference>
<dbReference type="GO" id="GO:0000422">
    <property type="term" value="P:autophagy of mitochondrion"/>
    <property type="evidence" value="ECO:0007669"/>
    <property type="project" value="TreeGrafter"/>
</dbReference>
<dbReference type="GO" id="GO:0061723">
    <property type="term" value="P:glycophagy"/>
    <property type="evidence" value="ECO:0007669"/>
    <property type="project" value="TreeGrafter"/>
</dbReference>
<dbReference type="GO" id="GO:0034727">
    <property type="term" value="P:piecemeal microautophagy of the nucleus"/>
    <property type="evidence" value="ECO:0007669"/>
    <property type="project" value="TreeGrafter"/>
</dbReference>
<dbReference type="GO" id="GO:0015031">
    <property type="term" value="P:protein transport"/>
    <property type="evidence" value="ECO:0007669"/>
    <property type="project" value="UniProtKB-KW"/>
</dbReference>
<dbReference type="CDD" id="cd01612">
    <property type="entry name" value="Ubl_ATG12"/>
    <property type="match status" value="1"/>
</dbReference>
<dbReference type="FunFam" id="3.10.20.90:FF:000150">
    <property type="entry name" value="Ubiquitin-like protein ATG12"/>
    <property type="match status" value="1"/>
</dbReference>
<dbReference type="Gene3D" id="3.10.20.90">
    <property type="entry name" value="Phosphatidylinositol 3-kinase Catalytic Subunit, Chain A, domain 1"/>
    <property type="match status" value="1"/>
</dbReference>
<dbReference type="InterPro" id="IPR007242">
    <property type="entry name" value="Atg12"/>
</dbReference>
<dbReference type="InterPro" id="IPR029071">
    <property type="entry name" value="Ubiquitin-like_domsf"/>
</dbReference>
<dbReference type="PANTHER" id="PTHR13385">
    <property type="entry name" value="AUTOPHAGY PROTEIN 12"/>
    <property type="match status" value="1"/>
</dbReference>
<dbReference type="PANTHER" id="PTHR13385:SF0">
    <property type="entry name" value="UBIQUITIN-LIKE PROTEIN ATG12"/>
    <property type="match status" value="1"/>
</dbReference>
<dbReference type="Pfam" id="PF04110">
    <property type="entry name" value="APG12"/>
    <property type="match status" value="1"/>
</dbReference>
<dbReference type="SUPFAM" id="SSF54236">
    <property type="entry name" value="Ubiquitin-like"/>
    <property type="match status" value="1"/>
</dbReference>
<evidence type="ECO:0000250" key="1"/>
<evidence type="ECO:0000305" key="2"/>
<keyword id="KW-0072">Autophagy</keyword>
<keyword id="KW-1017">Isopeptide bond</keyword>
<keyword id="KW-0472">Membrane</keyword>
<keyword id="KW-0653">Protein transport</keyword>
<keyword id="KW-0813">Transport</keyword>
<keyword id="KW-0833">Ubl conjugation pathway</keyword>
<organism>
    <name type="scientific">Cryptococcus neoformans var. neoformans serotype D (strain B-3501A)</name>
    <name type="common">Filobasidiella neoformans</name>
    <dbReference type="NCBI Taxonomy" id="283643"/>
    <lineage>
        <taxon>Eukaryota</taxon>
        <taxon>Fungi</taxon>
        <taxon>Dikarya</taxon>
        <taxon>Basidiomycota</taxon>
        <taxon>Agaricomycotina</taxon>
        <taxon>Tremellomycetes</taxon>
        <taxon>Tremellales</taxon>
        <taxon>Cryptococcaceae</taxon>
        <taxon>Cryptococcus</taxon>
        <taxon>Cryptococcus neoformans species complex</taxon>
    </lineage>
</organism>